<gene>
    <name type="ordered locus">pXO1-01</name>
    <name type="ordered locus">BXA0003</name>
    <name type="ordered locus">GBAA_pXO1_0003</name>
</gene>
<organism>
    <name type="scientific">Bacillus anthracis</name>
    <dbReference type="NCBI Taxonomy" id="1392"/>
    <lineage>
        <taxon>Bacteria</taxon>
        <taxon>Bacillati</taxon>
        <taxon>Bacillota</taxon>
        <taxon>Bacilli</taxon>
        <taxon>Bacillales</taxon>
        <taxon>Bacillaceae</taxon>
        <taxon>Bacillus</taxon>
        <taxon>Bacillus cereus group</taxon>
    </lineage>
</organism>
<geneLocation type="plasmid">
    <name>pXO1</name>
</geneLocation>
<keyword id="KW-0614">Plasmid</keyword>
<keyword id="KW-1185">Reference proteome</keyword>
<dbReference type="EMBL" id="AF065404">
    <property type="protein sequence ID" value="AAD32305.1"/>
    <property type="molecule type" value="Genomic_DNA"/>
</dbReference>
<dbReference type="EMBL" id="AE011190">
    <property type="protein sequence ID" value="AAM25960.1"/>
    <property type="molecule type" value="Genomic_DNA"/>
</dbReference>
<dbReference type="EMBL" id="AE017336">
    <property type="protein sequence ID" value="AAT28744.2"/>
    <property type="molecule type" value="Genomic_DNA"/>
</dbReference>
<dbReference type="PIR" id="A59091">
    <property type="entry name" value="A59091"/>
</dbReference>
<dbReference type="RefSeq" id="NP_052697.1">
    <property type="nucleotide sequence ID" value="NC_001496.1"/>
</dbReference>
<dbReference type="RefSeq" id="WP_000453400.1">
    <property type="nucleotide sequence ID" value="NZ_VTZH01000012.1"/>
</dbReference>
<dbReference type="GeneID" id="45025401"/>
<dbReference type="KEGG" id="bar:GBAA_pXO1_0003"/>
<dbReference type="HOGENOM" id="CLU_068011_2_0_9"/>
<dbReference type="OMA" id="NPIWQNK"/>
<dbReference type="Proteomes" id="UP000000594">
    <property type="component" value="Plasmid pXO1"/>
</dbReference>
<dbReference type="InterPro" id="IPR011528">
    <property type="entry name" value="NERD"/>
</dbReference>
<dbReference type="Pfam" id="PF08378">
    <property type="entry name" value="NERD"/>
    <property type="match status" value="1"/>
</dbReference>
<dbReference type="PROSITE" id="PS50965">
    <property type="entry name" value="NERD"/>
    <property type="match status" value="1"/>
</dbReference>
<evidence type="ECO:0000255" key="1">
    <source>
        <dbReference type="PROSITE-ProRule" id="PRU00327"/>
    </source>
</evidence>
<accession>Q8KYT4</accession>
<accession>Q9X2X2</accession>
<feature type="chain" id="PRO_0000216824" description="Uncharacterized protein pXO1-01/BXA0003/GBAA_pXO1_0003">
    <location>
        <begin position="1"/>
        <end position="212"/>
    </location>
</feature>
<feature type="domain" description="NERD" evidence="1">
    <location>
        <begin position="29"/>
        <end position="146"/>
    </location>
</feature>
<feature type="sequence variant" description="In strain: Sterne.">
    <location>
        <begin position="155"/>
        <end position="199"/>
    </location>
</feature>
<proteinExistence type="predicted"/>
<sequence>MEVLIFELILIAVLIPLNSVVKKHVPKWKGKAGEKLVKRMLSKLDPKSYYVLHNVTVYTEYGDTTQIDHIVIAETGVFVVETKNYEGWIYGSEKAARWTQGIFRKKSSFQNPFHQNYKHIKAIEWLIEQQLPCISMAAFHPKCSLKRVNVHSKEKHVLYYNDLQKCIESYTDVQLTNDEVQHIYHTILRANIMDKDIEKKHVKYLHNKFAKQ</sequence>
<reference key="1">
    <citation type="journal article" date="1999" name="J. Bacteriol.">
        <title>Sequence and organization of pXO1, the large Bacillus anthracis plasmid harboring the anthrax toxin genes.</title>
        <authorList>
            <person name="Okinaka R.T."/>
            <person name="Cloud K."/>
            <person name="Hampton O."/>
            <person name="Hoffmaster A.R."/>
            <person name="Hill K.K."/>
            <person name="Keim P."/>
            <person name="Koehler T.M."/>
            <person name="Lamke G."/>
            <person name="Kumano S."/>
            <person name="Mahillon J."/>
            <person name="Manter D."/>
            <person name="Martinez Y."/>
            <person name="Ricke D."/>
            <person name="Svensson R."/>
            <person name="Jackson P.J."/>
        </authorList>
    </citation>
    <scope>NUCLEOTIDE SEQUENCE [LARGE SCALE GENOMIC DNA]</scope>
    <source>
        <strain>Sterne</strain>
    </source>
</reference>
<reference key="2">
    <citation type="journal article" date="2002" name="Science">
        <title>Comparative genome sequencing for discovery of novel polymorphisms in Bacillus anthracis.</title>
        <authorList>
            <person name="Read T.D."/>
            <person name="Salzberg S.L."/>
            <person name="Pop M."/>
            <person name="Shumway M.F."/>
            <person name="Umayam L."/>
            <person name="Jiang L."/>
            <person name="Holtzapple E."/>
            <person name="Busch J.D."/>
            <person name="Smith K.L."/>
            <person name="Schupp J.M."/>
            <person name="Solomon D."/>
            <person name="Keim P."/>
            <person name="Fraser C.M."/>
        </authorList>
    </citation>
    <scope>NUCLEOTIDE SEQUENCE [GENOMIC DNA]</scope>
    <source>
        <strain>Ames / isolate Florida / A2012</strain>
    </source>
</reference>
<reference key="3">
    <citation type="journal article" date="2009" name="J. Bacteriol.">
        <title>The complete genome sequence of Bacillus anthracis Ames 'Ancestor'.</title>
        <authorList>
            <person name="Ravel J."/>
            <person name="Jiang L."/>
            <person name="Stanley S.T."/>
            <person name="Wilson M.R."/>
            <person name="Decker R.S."/>
            <person name="Read T.D."/>
            <person name="Worsham P."/>
            <person name="Keim P.S."/>
            <person name="Salzberg S.L."/>
            <person name="Fraser-Liggett C.M."/>
            <person name="Rasko D.A."/>
        </authorList>
    </citation>
    <scope>NUCLEOTIDE SEQUENCE [LARGE SCALE GENOMIC DNA]</scope>
    <source>
        <strain>Ames ancestor</strain>
    </source>
</reference>
<name>Y6003_BACAN</name>
<protein>
    <recommendedName>
        <fullName>Uncharacterized protein pXO1-01/BXA0003/GBAA_pXO1_0003</fullName>
    </recommendedName>
</protein>